<feature type="chain" id="PRO_0000062499" description="Ribulose bisphosphate carboxylase large chain">
    <location>
        <begin position="1" status="less than"/>
        <end position="467"/>
    </location>
</feature>
<feature type="active site" description="Proton acceptor" evidence="1">
    <location>
        <position position="166"/>
    </location>
</feature>
<feature type="active site" description="Proton acceptor" evidence="1">
    <location>
        <position position="285"/>
    </location>
</feature>
<feature type="binding site" description="in homodimeric partner" evidence="1">
    <location>
        <position position="114"/>
    </location>
    <ligand>
        <name>substrate</name>
    </ligand>
</feature>
<feature type="binding site" evidence="1">
    <location>
        <position position="164"/>
    </location>
    <ligand>
        <name>substrate</name>
    </ligand>
</feature>
<feature type="binding site" evidence="1">
    <location>
        <position position="168"/>
    </location>
    <ligand>
        <name>substrate</name>
    </ligand>
</feature>
<feature type="binding site" description="via carbamate group" evidence="1">
    <location>
        <position position="192"/>
    </location>
    <ligand>
        <name>Mg(2+)</name>
        <dbReference type="ChEBI" id="CHEBI:18420"/>
    </ligand>
</feature>
<feature type="binding site" evidence="1">
    <location>
        <position position="194"/>
    </location>
    <ligand>
        <name>Mg(2+)</name>
        <dbReference type="ChEBI" id="CHEBI:18420"/>
    </ligand>
</feature>
<feature type="binding site" evidence="1">
    <location>
        <position position="195"/>
    </location>
    <ligand>
        <name>Mg(2+)</name>
        <dbReference type="ChEBI" id="CHEBI:18420"/>
    </ligand>
</feature>
<feature type="binding site" evidence="1">
    <location>
        <position position="286"/>
    </location>
    <ligand>
        <name>substrate</name>
    </ligand>
</feature>
<feature type="binding site" evidence="1">
    <location>
        <position position="318"/>
    </location>
    <ligand>
        <name>substrate</name>
    </ligand>
</feature>
<feature type="binding site" evidence="1">
    <location>
        <position position="370"/>
    </location>
    <ligand>
        <name>substrate</name>
    </ligand>
</feature>
<feature type="site" description="Transition state stabilizer" evidence="1">
    <location>
        <position position="325"/>
    </location>
</feature>
<feature type="modified residue" description="N6,N6,N6-trimethyllysine" evidence="1">
    <location>
        <position position="5"/>
    </location>
</feature>
<feature type="modified residue" description="N6-carboxylysine" evidence="1">
    <location>
        <position position="192"/>
    </location>
</feature>
<feature type="disulfide bond" description="Interchain; in linked form" evidence="1">
    <location>
        <position position="238"/>
    </location>
</feature>
<feature type="non-terminal residue">
    <location>
        <position position="1"/>
    </location>
</feature>
<keyword id="KW-0113">Calvin cycle</keyword>
<keyword id="KW-0120">Carbon dioxide fixation</keyword>
<keyword id="KW-0150">Chloroplast</keyword>
<keyword id="KW-1015">Disulfide bond</keyword>
<keyword id="KW-0456">Lyase</keyword>
<keyword id="KW-0460">Magnesium</keyword>
<keyword id="KW-0479">Metal-binding</keyword>
<keyword id="KW-0488">Methylation</keyword>
<keyword id="KW-0503">Monooxygenase</keyword>
<keyword id="KW-0560">Oxidoreductase</keyword>
<keyword id="KW-0601">Photorespiration</keyword>
<keyword id="KW-0602">Photosynthesis</keyword>
<keyword id="KW-0934">Plastid</keyword>
<comment type="function">
    <text evidence="1">RuBisCO catalyzes two reactions: the carboxylation of D-ribulose 1,5-bisphosphate, the primary event in carbon dioxide fixation, as well as the oxidative fragmentation of the pentose substrate in the photorespiration process. Both reactions occur simultaneously and in competition at the same active site.</text>
</comment>
<comment type="catalytic activity">
    <reaction evidence="1">
        <text>2 (2R)-3-phosphoglycerate + 2 H(+) = D-ribulose 1,5-bisphosphate + CO2 + H2O</text>
        <dbReference type="Rhea" id="RHEA:23124"/>
        <dbReference type="ChEBI" id="CHEBI:15377"/>
        <dbReference type="ChEBI" id="CHEBI:15378"/>
        <dbReference type="ChEBI" id="CHEBI:16526"/>
        <dbReference type="ChEBI" id="CHEBI:57870"/>
        <dbReference type="ChEBI" id="CHEBI:58272"/>
        <dbReference type="EC" id="4.1.1.39"/>
    </reaction>
</comment>
<comment type="catalytic activity">
    <reaction evidence="1">
        <text>D-ribulose 1,5-bisphosphate + O2 = 2-phosphoglycolate + (2R)-3-phosphoglycerate + 2 H(+)</text>
        <dbReference type="Rhea" id="RHEA:36631"/>
        <dbReference type="ChEBI" id="CHEBI:15378"/>
        <dbReference type="ChEBI" id="CHEBI:15379"/>
        <dbReference type="ChEBI" id="CHEBI:57870"/>
        <dbReference type="ChEBI" id="CHEBI:58033"/>
        <dbReference type="ChEBI" id="CHEBI:58272"/>
    </reaction>
</comment>
<comment type="cofactor">
    <cofactor evidence="1">
        <name>Mg(2+)</name>
        <dbReference type="ChEBI" id="CHEBI:18420"/>
    </cofactor>
    <text evidence="1">Binds 1 Mg(2+) ion per subunit.</text>
</comment>
<comment type="subunit">
    <text evidence="1">Heterohexadecamer of 8 large chains and 8 small chains; disulfide-linked. The disulfide link is formed within the large subunit homodimers.</text>
</comment>
<comment type="subcellular location">
    <subcellularLocation>
        <location>Plastid</location>
        <location>Chloroplast</location>
    </subcellularLocation>
</comment>
<comment type="PTM">
    <text evidence="1">The disulfide bond which can form in the large chain dimeric partners within the hexadecamer appears to be associated with oxidative stress and protein turnover.</text>
</comment>
<comment type="miscellaneous">
    <text evidence="1">The basic functional RuBisCO is composed of a large chain homodimer in a 'head-to-tail' conformation. In form I RuBisCO this homodimer is arranged in a barrel-like tetramer with the small subunits forming a tetrameric 'cap' on each end of the 'barrel'.</text>
</comment>
<comment type="similarity">
    <text evidence="1">Belongs to the RuBisCO large chain family. Type I subfamily.</text>
</comment>
<organism>
    <name type="scientific">Jasminum simplicifolium subsp. suavissimum</name>
    <name type="common">Native jasmine</name>
    <name type="synonym">Jasminum suavissimum</name>
    <dbReference type="NCBI Taxonomy" id="4148"/>
    <lineage>
        <taxon>Eukaryota</taxon>
        <taxon>Viridiplantae</taxon>
        <taxon>Streptophyta</taxon>
        <taxon>Embryophyta</taxon>
        <taxon>Tracheophyta</taxon>
        <taxon>Spermatophyta</taxon>
        <taxon>Magnoliopsida</taxon>
        <taxon>eudicotyledons</taxon>
        <taxon>Gunneridae</taxon>
        <taxon>Pentapetalae</taxon>
        <taxon>asterids</taxon>
        <taxon>lamiids</taxon>
        <taxon>Lamiales</taxon>
        <taxon>Oleaceae</taxon>
        <taxon>Jasmineae</taxon>
        <taxon>Jasminum</taxon>
    </lineage>
</organism>
<dbReference type="EC" id="4.1.1.39" evidence="1"/>
<dbReference type="EMBL" id="L01929">
    <property type="protein sequence ID" value="AAA84333.2"/>
    <property type="molecule type" value="Genomic_DNA"/>
</dbReference>
<dbReference type="SMR" id="P28427"/>
<dbReference type="GO" id="GO:0009507">
    <property type="term" value="C:chloroplast"/>
    <property type="evidence" value="ECO:0007669"/>
    <property type="project" value="UniProtKB-SubCell"/>
</dbReference>
<dbReference type="GO" id="GO:0000287">
    <property type="term" value="F:magnesium ion binding"/>
    <property type="evidence" value="ECO:0007669"/>
    <property type="project" value="InterPro"/>
</dbReference>
<dbReference type="GO" id="GO:0004497">
    <property type="term" value="F:monooxygenase activity"/>
    <property type="evidence" value="ECO:0007669"/>
    <property type="project" value="UniProtKB-KW"/>
</dbReference>
<dbReference type="GO" id="GO:0016984">
    <property type="term" value="F:ribulose-bisphosphate carboxylase activity"/>
    <property type="evidence" value="ECO:0007669"/>
    <property type="project" value="UniProtKB-EC"/>
</dbReference>
<dbReference type="GO" id="GO:0009853">
    <property type="term" value="P:photorespiration"/>
    <property type="evidence" value="ECO:0007669"/>
    <property type="project" value="UniProtKB-KW"/>
</dbReference>
<dbReference type="GO" id="GO:0019253">
    <property type="term" value="P:reductive pentose-phosphate cycle"/>
    <property type="evidence" value="ECO:0007669"/>
    <property type="project" value="UniProtKB-KW"/>
</dbReference>
<dbReference type="CDD" id="cd08212">
    <property type="entry name" value="RuBisCO_large_I"/>
    <property type="match status" value="1"/>
</dbReference>
<dbReference type="FunFam" id="3.20.20.110:FF:000001">
    <property type="entry name" value="Ribulose bisphosphate carboxylase large chain"/>
    <property type="match status" value="1"/>
</dbReference>
<dbReference type="FunFam" id="3.30.70.150:FF:000001">
    <property type="entry name" value="Ribulose bisphosphate carboxylase large chain"/>
    <property type="match status" value="1"/>
</dbReference>
<dbReference type="Gene3D" id="3.20.20.110">
    <property type="entry name" value="Ribulose bisphosphate carboxylase, large subunit, C-terminal domain"/>
    <property type="match status" value="1"/>
</dbReference>
<dbReference type="Gene3D" id="3.30.70.150">
    <property type="entry name" value="RuBisCO large subunit, N-terminal domain"/>
    <property type="match status" value="1"/>
</dbReference>
<dbReference type="HAMAP" id="MF_01338">
    <property type="entry name" value="RuBisCO_L_type1"/>
    <property type="match status" value="1"/>
</dbReference>
<dbReference type="InterPro" id="IPR033966">
    <property type="entry name" value="RuBisCO"/>
</dbReference>
<dbReference type="InterPro" id="IPR020878">
    <property type="entry name" value="RuBisCo_large_chain_AS"/>
</dbReference>
<dbReference type="InterPro" id="IPR000685">
    <property type="entry name" value="RuBisCO_lsu_C"/>
</dbReference>
<dbReference type="InterPro" id="IPR036376">
    <property type="entry name" value="RuBisCO_lsu_C_sf"/>
</dbReference>
<dbReference type="InterPro" id="IPR017443">
    <property type="entry name" value="RuBisCO_lsu_fd_N"/>
</dbReference>
<dbReference type="InterPro" id="IPR036422">
    <property type="entry name" value="RuBisCO_lsu_N_sf"/>
</dbReference>
<dbReference type="InterPro" id="IPR020888">
    <property type="entry name" value="RuBisCO_lsuI"/>
</dbReference>
<dbReference type="NCBIfam" id="NF003252">
    <property type="entry name" value="PRK04208.1"/>
    <property type="match status" value="1"/>
</dbReference>
<dbReference type="PANTHER" id="PTHR42704">
    <property type="entry name" value="RIBULOSE BISPHOSPHATE CARBOXYLASE"/>
    <property type="match status" value="1"/>
</dbReference>
<dbReference type="PANTHER" id="PTHR42704:SF15">
    <property type="entry name" value="RIBULOSE BISPHOSPHATE CARBOXYLASE LARGE CHAIN"/>
    <property type="match status" value="1"/>
</dbReference>
<dbReference type="Pfam" id="PF00016">
    <property type="entry name" value="RuBisCO_large"/>
    <property type="match status" value="1"/>
</dbReference>
<dbReference type="Pfam" id="PF02788">
    <property type="entry name" value="RuBisCO_large_N"/>
    <property type="match status" value="1"/>
</dbReference>
<dbReference type="SFLD" id="SFLDG01052">
    <property type="entry name" value="RuBisCO"/>
    <property type="match status" value="1"/>
</dbReference>
<dbReference type="SFLD" id="SFLDS00014">
    <property type="entry name" value="RuBisCO"/>
    <property type="match status" value="1"/>
</dbReference>
<dbReference type="SFLD" id="SFLDG00301">
    <property type="entry name" value="RuBisCO-like_proteins"/>
    <property type="match status" value="1"/>
</dbReference>
<dbReference type="SUPFAM" id="SSF51649">
    <property type="entry name" value="RuBisCo, C-terminal domain"/>
    <property type="match status" value="1"/>
</dbReference>
<dbReference type="SUPFAM" id="SSF54966">
    <property type="entry name" value="RuBisCO, large subunit, small (N-terminal) domain"/>
    <property type="match status" value="1"/>
</dbReference>
<dbReference type="PROSITE" id="PS00157">
    <property type="entry name" value="RUBISCO_LARGE"/>
    <property type="match status" value="1"/>
</dbReference>
<geneLocation type="chloroplast"/>
<accession>P28427</accession>
<gene>
    <name evidence="1" type="primary">rbcL</name>
</gene>
<proteinExistence type="inferred from homology"/>
<protein>
    <recommendedName>
        <fullName evidence="1">Ribulose bisphosphate carboxylase large chain</fullName>
        <shortName evidence="1">RuBisCO large subunit</shortName>
        <ecNumber evidence="1">4.1.1.39</ecNumber>
    </recommendedName>
</protein>
<reference key="1">
    <citation type="journal article" date="1992" name="Science">
        <title>Carnivorous plants: phylogeny and structural evolution.</title>
        <authorList>
            <person name="Albert V.A."/>
            <person name="Williams S.E."/>
            <person name="Chase M.W."/>
        </authorList>
    </citation>
    <scope>NUCLEOTIDE SEQUENCE [GENOMIC DNA]</scope>
</reference>
<name>RBL_JASSS</name>
<sequence>SVGFKAGVKEYKLTYYTPEYKTKDTDILAAFRVTPQPGVPPEEAGAAVAAESSTGTWTTVWTDGLTSLDRYKGRCYHIEPVPGEKDQYICYVAYPLDLFEEGSVTNMFTSIVGNVFGFKALRALRLEDLRVPPAYIKTFQGPPHGIQVERDKLNKYGRPLLGCTIKPKLGLSAKNYGRAVYECLRGGLDFTKDDENVNSQPFMRWRDRFLFCAEAIFKVQAETGEIKGHYLNATAGTCEEMIKRAVFARELGAPIVMHDYLTGGFTANTSLAHYCRDNGLLLHIHRAMHAVIDRQKNHGIHFRVLAKALRMSGGDHIHSGTVVGKLEGERDITLGFVDLLRDDFIEKDRSRGIYFTQDWVSLPGVLPVASGGIHVWHMPALTEIFGDDSVLQFGGGTLGHPWGNAPGAVANRVALEACVKARNEGRDLASEGNVIIREAAKWSLELSAACEVWKEIRFNFEAVDTLH</sequence>
<evidence type="ECO:0000255" key="1">
    <source>
        <dbReference type="HAMAP-Rule" id="MF_01338"/>
    </source>
</evidence>